<reference key="1">
    <citation type="journal article" date="2011" name="MBio">
        <title>Novel metabolic attributes of the genus Cyanothece, comprising a group of unicellular nitrogen-fixing Cyanobacteria.</title>
        <authorList>
            <person name="Bandyopadhyay A."/>
            <person name="Elvitigala T."/>
            <person name="Welsh E."/>
            <person name="Stockel J."/>
            <person name="Liberton M."/>
            <person name="Min H."/>
            <person name="Sherman L.A."/>
            <person name="Pakrasi H.B."/>
        </authorList>
    </citation>
    <scope>NUCLEOTIDE SEQUENCE [LARGE SCALE GENOMIC DNA]</scope>
    <source>
        <strain>PCC 8801 / RF-1</strain>
    </source>
</reference>
<evidence type="ECO:0000255" key="1">
    <source>
        <dbReference type="HAMAP-Rule" id="MF_00530"/>
    </source>
</evidence>
<evidence type="ECO:0000256" key="2">
    <source>
        <dbReference type="SAM" id="MobiDB-lite"/>
    </source>
</evidence>
<accession>B7K2R7</accession>
<proteinExistence type="inferred from homology"/>
<keyword id="KW-0066">ATP synthesis</keyword>
<keyword id="KW-0139">CF(1)</keyword>
<keyword id="KW-0375">Hydrogen ion transport</keyword>
<keyword id="KW-0406">Ion transport</keyword>
<keyword id="KW-0472">Membrane</keyword>
<keyword id="KW-1185">Reference proteome</keyword>
<keyword id="KW-0793">Thylakoid</keyword>
<keyword id="KW-0813">Transport</keyword>
<gene>
    <name evidence="1" type="primary">atpC</name>
    <name type="ordered locus">PCC8801_3656</name>
</gene>
<sequence>MALQVRVITPDKIVWDGDVEEAILPSTSGQLGILPSHAPLLTNLDIGVMRVRLDKDWKSLVVMGGIAEVEQDILQVLVNSAEIGDDITKEDAQADFSEAQSRLEEANKGSDRREQIKASQAYKRARARLQAAGGLV</sequence>
<feature type="chain" id="PRO_1000127845" description="ATP synthase epsilon chain">
    <location>
        <begin position="1"/>
        <end position="136"/>
    </location>
</feature>
<feature type="region of interest" description="Disordered" evidence="2">
    <location>
        <begin position="95"/>
        <end position="115"/>
    </location>
</feature>
<feature type="compositionally biased region" description="Basic and acidic residues" evidence="2">
    <location>
        <begin position="101"/>
        <end position="115"/>
    </location>
</feature>
<organism>
    <name type="scientific">Rippkaea orientalis (strain PCC 8801 / RF-1)</name>
    <name type="common">Cyanothece sp. (strain PCC 8801)</name>
    <dbReference type="NCBI Taxonomy" id="41431"/>
    <lineage>
        <taxon>Bacteria</taxon>
        <taxon>Bacillati</taxon>
        <taxon>Cyanobacteriota</taxon>
        <taxon>Cyanophyceae</taxon>
        <taxon>Oscillatoriophycideae</taxon>
        <taxon>Chroococcales</taxon>
        <taxon>Aphanothecaceae</taxon>
        <taxon>Rippkaea</taxon>
        <taxon>Rippkaea orientalis</taxon>
    </lineage>
</organism>
<comment type="function">
    <text evidence="1">Produces ATP from ADP in the presence of a proton gradient across the membrane.</text>
</comment>
<comment type="subunit">
    <text evidence="1">F-type ATPases have 2 components, CF(1) - the catalytic core - and CF(0) - the membrane proton channel. CF(1) has five subunits: alpha(3), beta(3), gamma(1), delta(1), epsilon(1). CF(0) has three main subunits: a, b and c.</text>
</comment>
<comment type="subcellular location">
    <subcellularLocation>
        <location evidence="1">Cellular thylakoid membrane</location>
        <topology evidence="1">Peripheral membrane protein</topology>
    </subcellularLocation>
</comment>
<comment type="similarity">
    <text evidence="1">Belongs to the ATPase epsilon chain family.</text>
</comment>
<name>ATPE_RIPO1</name>
<dbReference type="EMBL" id="CP001287">
    <property type="protein sequence ID" value="ACK67618.1"/>
    <property type="molecule type" value="Genomic_DNA"/>
</dbReference>
<dbReference type="RefSeq" id="WP_012596876.1">
    <property type="nucleotide sequence ID" value="NC_011726.1"/>
</dbReference>
<dbReference type="SMR" id="B7K2R7"/>
<dbReference type="STRING" id="41431.PCC8801_3656"/>
<dbReference type="KEGG" id="cyp:PCC8801_3656"/>
<dbReference type="eggNOG" id="COG0355">
    <property type="taxonomic scope" value="Bacteria"/>
</dbReference>
<dbReference type="HOGENOM" id="CLU_084338_1_2_3"/>
<dbReference type="OrthoDB" id="9804110at2"/>
<dbReference type="Proteomes" id="UP000008204">
    <property type="component" value="Chromosome"/>
</dbReference>
<dbReference type="GO" id="GO:0031676">
    <property type="term" value="C:plasma membrane-derived thylakoid membrane"/>
    <property type="evidence" value="ECO:0007669"/>
    <property type="project" value="UniProtKB-SubCell"/>
</dbReference>
<dbReference type="GO" id="GO:0045259">
    <property type="term" value="C:proton-transporting ATP synthase complex"/>
    <property type="evidence" value="ECO:0007669"/>
    <property type="project" value="UniProtKB-KW"/>
</dbReference>
<dbReference type="GO" id="GO:0005524">
    <property type="term" value="F:ATP binding"/>
    <property type="evidence" value="ECO:0007669"/>
    <property type="project" value="UniProtKB-UniRule"/>
</dbReference>
<dbReference type="GO" id="GO:0046933">
    <property type="term" value="F:proton-transporting ATP synthase activity, rotational mechanism"/>
    <property type="evidence" value="ECO:0007669"/>
    <property type="project" value="UniProtKB-UniRule"/>
</dbReference>
<dbReference type="CDD" id="cd12152">
    <property type="entry name" value="F1-ATPase_delta"/>
    <property type="match status" value="1"/>
</dbReference>
<dbReference type="Gene3D" id="2.60.15.10">
    <property type="entry name" value="F0F1 ATP synthase delta/epsilon subunit, N-terminal"/>
    <property type="match status" value="1"/>
</dbReference>
<dbReference type="Gene3D" id="1.10.287.540">
    <property type="entry name" value="Helix hairpin bin"/>
    <property type="match status" value="1"/>
</dbReference>
<dbReference type="HAMAP" id="MF_00530">
    <property type="entry name" value="ATP_synth_epsil_bac"/>
    <property type="match status" value="1"/>
</dbReference>
<dbReference type="InterPro" id="IPR001469">
    <property type="entry name" value="ATP_synth_F1_dsu/esu"/>
</dbReference>
<dbReference type="InterPro" id="IPR020546">
    <property type="entry name" value="ATP_synth_F1_dsu/esu_N"/>
</dbReference>
<dbReference type="InterPro" id="IPR020547">
    <property type="entry name" value="ATP_synth_F1_esu_C"/>
</dbReference>
<dbReference type="InterPro" id="IPR036771">
    <property type="entry name" value="ATPsynth_dsu/esu_N"/>
</dbReference>
<dbReference type="NCBIfam" id="TIGR01216">
    <property type="entry name" value="ATP_synt_epsi"/>
    <property type="match status" value="1"/>
</dbReference>
<dbReference type="PANTHER" id="PTHR13822">
    <property type="entry name" value="ATP SYNTHASE DELTA/EPSILON CHAIN"/>
    <property type="match status" value="1"/>
</dbReference>
<dbReference type="PANTHER" id="PTHR13822:SF10">
    <property type="entry name" value="ATP SYNTHASE EPSILON CHAIN, CHLOROPLASTIC"/>
    <property type="match status" value="1"/>
</dbReference>
<dbReference type="Pfam" id="PF00401">
    <property type="entry name" value="ATP-synt_DE"/>
    <property type="match status" value="1"/>
</dbReference>
<dbReference type="Pfam" id="PF02823">
    <property type="entry name" value="ATP-synt_DE_N"/>
    <property type="match status" value="1"/>
</dbReference>
<dbReference type="SUPFAM" id="SSF51344">
    <property type="entry name" value="Epsilon subunit of F1F0-ATP synthase N-terminal domain"/>
    <property type="match status" value="1"/>
</dbReference>
<protein>
    <recommendedName>
        <fullName evidence="1">ATP synthase epsilon chain</fullName>
    </recommendedName>
    <alternativeName>
        <fullName evidence="1">ATP synthase F1 sector epsilon subunit</fullName>
    </alternativeName>
    <alternativeName>
        <fullName evidence="1">F-ATPase epsilon subunit</fullName>
    </alternativeName>
</protein>